<organism>
    <name type="scientific">Lavandula stoechas</name>
    <name type="common">Butterfly lavender</name>
    <dbReference type="NCBI Taxonomy" id="39333"/>
    <lineage>
        <taxon>Eukaryota</taxon>
        <taxon>Viridiplantae</taxon>
        <taxon>Streptophyta</taxon>
        <taxon>Embryophyta</taxon>
        <taxon>Tracheophyta</taxon>
        <taxon>Spermatophyta</taxon>
        <taxon>Magnoliopsida</taxon>
        <taxon>eudicotyledons</taxon>
        <taxon>Gunneridae</taxon>
        <taxon>Pentapetalae</taxon>
        <taxon>asterids</taxon>
        <taxon>lamiids</taxon>
        <taxon>Lamiales</taxon>
        <taxon>Lamiaceae</taxon>
        <taxon>Nepetoideae</taxon>
        <taxon>Ocimeae</taxon>
        <taxon>Lavandulinae</taxon>
        <taxon>Lavandula</taxon>
    </lineage>
</organism>
<dbReference type="EC" id="4.2.3.-" evidence="3"/>
<dbReference type="EMBL" id="JX501515">
    <property type="protein sequence ID" value="AGN72802.1"/>
    <property type="molecule type" value="mRNA"/>
</dbReference>
<dbReference type="SMR" id="T1RRL8"/>
<dbReference type="UniPathway" id="UPA00213"/>
<dbReference type="GO" id="GO:0009507">
    <property type="term" value="C:chloroplast"/>
    <property type="evidence" value="ECO:0007669"/>
    <property type="project" value="UniProtKB-SubCell"/>
</dbReference>
<dbReference type="GO" id="GO:0016829">
    <property type="term" value="F:lyase activity"/>
    <property type="evidence" value="ECO:0000314"/>
    <property type="project" value="UniProtKB"/>
</dbReference>
<dbReference type="GO" id="GO:0000287">
    <property type="term" value="F:magnesium ion binding"/>
    <property type="evidence" value="ECO:0007669"/>
    <property type="project" value="InterPro"/>
</dbReference>
<dbReference type="GO" id="GO:0050550">
    <property type="term" value="F:pinene synthase activity"/>
    <property type="evidence" value="ECO:0000314"/>
    <property type="project" value="UniProtKB"/>
</dbReference>
<dbReference type="GO" id="GO:0010333">
    <property type="term" value="F:terpene synthase activity"/>
    <property type="evidence" value="ECO:0000314"/>
    <property type="project" value="UniProtKB"/>
</dbReference>
<dbReference type="GO" id="GO:0046248">
    <property type="term" value="P:alpha-pinene biosynthetic process"/>
    <property type="evidence" value="ECO:0000314"/>
    <property type="project" value="UniProtKB"/>
</dbReference>
<dbReference type="GO" id="GO:0016102">
    <property type="term" value="P:diterpenoid biosynthetic process"/>
    <property type="evidence" value="ECO:0007669"/>
    <property type="project" value="InterPro"/>
</dbReference>
<dbReference type="GO" id="GO:0010597">
    <property type="term" value="P:green leaf volatile biosynthetic process"/>
    <property type="evidence" value="ECO:0000314"/>
    <property type="project" value="UniProtKB"/>
</dbReference>
<dbReference type="GO" id="GO:0016099">
    <property type="term" value="P:monoterpenoid biosynthetic process"/>
    <property type="evidence" value="ECO:0000314"/>
    <property type="project" value="UniProtKB"/>
</dbReference>
<dbReference type="CDD" id="cd00684">
    <property type="entry name" value="Terpene_cyclase_plant_C1"/>
    <property type="match status" value="1"/>
</dbReference>
<dbReference type="FunFam" id="1.10.600.10:FF:000007">
    <property type="entry name" value="Isoprene synthase, chloroplastic"/>
    <property type="match status" value="1"/>
</dbReference>
<dbReference type="FunFam" id="1.50.10.130:FF:000001">
    <property type="entry name" value="Isoprene synthase, chloroplastic"/>
    <property type="match status" value="1"/>
</dbReference>
<dbReference type="Gene3D" id="1.10.600.10">
    <property type="entry name" value="Farnesyl Diphosphate Synthase"/>
    <property type="match status" value="1"/>
</dbReference>
<dbReference type="Gene3D" id="1.50.10.130">
    <property type="entry name" value="Terpene synthase, N-terminal domain"/>
    <property type="match status" value="1"/>
</dbReference>
<dbReference type="InterPro" id="IPR008949">
    <property type="entry name" value="Isoprenoid_synthase_dom_sf"/>
</dbReference>
<dbReference type="InterPro" id="IPR034741">
    <property type="entry name" value="Terpene_cyclase-like_1_C"/>
</dbReference>
<dbReference type="InterPro" id="IPR044814">
    <property type="entry name" value="Terpene_cyclase_plant_C1"/>
</dbReference>
<dbReference type="InterPro" id="IPR001906">
    <property type="entry name" value="Terpene_synth_N"/>
</dbReference>
<dbReference type="InterPro" id="IPR036965">
    <property type="entry name" value="Terpene_synth_N_sf"/>
</dbReference>
<dbReference type="InterPro" id="IPR050148">
    <property type="entry name" value="Terpene_synthase-like"/>
</dbReference>
<dbReference type="InterPro" id="IPR005630">
    <property type="entry name" value="Terpene_synthase_metal-bd"/>
</dbReference>
<dbReference type="InterPro" id="IPR008930">
    <property type="entry name" value="Terpenoid_cyclase/PrenylTrfase"/>
</dbReference>
<dbReference type="PANTHER" id="PTHR31225">
    <property type="entry name" value="OS04G0344100 PROTEIN-RELATED"/>
    <property type="match status" value="1"/>
</dbReference>
<dbReference type="PANTHER" id="PTHR31225:SF9">
    <property type="entry name" value="TERPENE SYNTHASE 10"/>
    <property type="match status" value="1"/>
</dbReference>
<dbReference type="Pfam" id="PF01397">
    <property type="entry name" value="Terpene_synth"/>
    <property type="match status" value="1"/>
</dbReference>
<dbReference type="Pfam" id="PF03936">
    <property type="entry name" value="Terpene_synth_C"/>
    <property type="match status" value="1"/>
</dbReference>
<dbReference type="SFLD" id="SFLDG01019">
    <property type="entry name" value="Terpene_Cyclase_Like_1_C_Termi"/>
    <property type="match status" value="1"/>
</dbReference>
<dbReference type="SFLD" id="SFLDG01604">
    <property type="entry name" value="Terpene_Cyclase_Like_1_C_Termi"/>
    <property type="match status" value="1"/>
</dbReference>
<dbReference type="SFLD" id="SFLDG01014">
    <property type="entry name" value="Terpene_Cyclase_Like_1_N-term"/>
    <property type="match status" value="1"/>
</dbReference>
<dbReference type="SUPFAM" id="SSF48239">
    <property type="entry name" value="Terpenoid cyclases/Protein prenyltransferases"/>
    <property type="match status" value="1"/>
</dbReference>
<dbReference type="SUPFAM" id="SSF48576">
    <property type="entry name" value="Terpenoid synthases"/>
    <property type="match status" value="1"/>
</dbReference>
<gene>
    <name evidence="7" type="primary">PINS</name>
</gene>
<comment type="function">
    <text evidence="3 6">Monoterpene synthase involved in the biosynthesis of volatile compounds widely used in aromatherapy and folk medicine, and present in culinary herbs (PubMed:24943828). Mediates the conversion of (2E)-geranyl diphosphate (GPP) into alpha-pinene and, as minor compounds, into alpha-phellandrene, limonene and alpha-terpinolene (By similarity).</text>
</comment>
<comment type="catalytic activity">
    <reaction evidence="3">
        <text>(2E)-geranyl diphosphate = alpha-pinene + diphosphate</text>
        <dbReference type="Rhea" id="RHEA:25662"/>
        <dbReference type="ChEBI" id="CHEBI:33019"/>
        <dbReference type="ChEBI" id="CHEBI:36740"/>
        <dbReference type="ChEBI" id="CHEBI:58057"/>
    </reaction>
    <physiologicalReaction direction="left-to-right" evidence="3">
        <dbReference type="Rhea" id="RHEA:25663"/>
    </physiologicalReaction>
</comment>
<comment type="cofactor">
    <cofactor evidence="1">
        <name>Mg(2+)</name>
        <dbReference type="ChEBI" id="CHEBI:18420"/>
    </cofactor>
    <cofactor evidence="1">
        <name>Mn(2+)</name>
        <dbReference type="ChEBI" id="CHEBI:29035"/>
    </cofactor>
    <text evidence="1">Binds 3 Mg(2+) or Mn(2+) ions per subunit.</text>
</comment>
<comment type="pathway">
    <text evidence="3">Secondary metabolite biosynthesis; terpenoid biosynthesis.</text>
</comment>
<comment type="subcellular location">
    <subcellularLocation>
        <location evidence="4">Plastid</location>
        <location evidence="4">Chloroplast</location>
    </subcellularLocation>
</comment>
<comment type="tissue specificity">
    <text evidence="6">Barely detectable in leaves.</text>
</comment>
<comment type="domain">
    <text evidence="2">The Asp-Asp-Xaa-Xaa-Asp/Glu (DDXXD/E) motif is important for the catalytic activity, presumably through binding to Mg(2+).</text>
</comment>
<comment type="similarity">
    <text evidence="8">Belongs to the terpene synthase family. Tpsa subfamily.</text>
</comment>
<keyword id="KW-0150">Chloroplast</keyword>
<keyword id="KW-0456">Lyase</keyword>
<keyword id="KW-0460">Magnesium</keyword>
<keyword id="KW-0479">Metal-binding</keyword>
<keyword id="KW-0934">Plastid</keyword>
<keyword id="KW-0809">Transit peptide</keyword>
<accession>T1RRL8</accession>
<sequence length="600" mass="70225">MSSISMHARPLNISAANNHHPSWDRRVSKPRRVAAKHLRLRLSCSLQLDGKPLDETRRSANYQPSAWDFNFIQSLHNQYKEDKYVTRHTELTAQVKMLLEEETDAVQQLDLIEDLKNLGINYLFKDKIQQILNHIYNQHRCFQNNQVEGNDLYFTALGFRLLRQHGFEVSQEVFDRFTNEEGTDFNPSLIDDTKGLLQLYEASFLLREGEDTLELARQFSTKLLQKKVDEDGDREVGDNLLVWIRHSLELPLHWRIHRIEARWFLDAYATRHDMNPIIFELAKLDFNITQATQQEELRDLSRWWNSAGLVEKLSFARDRVVESYFWAIGTLEPRQYGYQRKLVAKIIALISVVDDVYDIYGTLDELKLFTDVMRRWDAESFDQLPYYMKICYLIINNFIFELAYDILKDKGFNSLSYLQRSWLDVVEGYFTEAKWYYSGYTPNLEEYLKNAKITVTCPMILSQIYFTIASSIEKPELESMYKYHDILYLSGLLLRLPDDLGTALHELKRGDVPKAMQCYMKEKNVPEKEAREHVRFLIREASKQMNTVSAADCPFPDDFVAAAANLGRVANFVYVDGDGFGDQHSKMLQQIAALMFEPYD</sequence>
<proteinExistence type="evidence at transcript level"/>
<name>PINS_LAVST</name>
<reference key="1">
    <citation type="journal article" date="2015" name="Physiol. Plantarum">
        <title>Functional characterization of terpene synthases and chemotypic variation in three lavender species of section Stoechas.</title>
        <authorList>
            <person name="Benabdelkader T."/>
            <person name="Guitton Y."/>
            <person name="Pasquier B."/>
            <person name="Magnard J.L."/>
            <person name="Jullien F."/>
            <person name="Kameli A."/>
            <person name="Legendre L."/>
        </authorList>
    </citation>
    <scope>NUCLEOTIDE SEQUENCE [MRNA]</scope>
    <scope>FUNCTION</scope>
    <scope>TISSUE SPECIFICITY</scope>
    <source>
        <tissue>Leaf</tissue>
    </source>
</reference>
<feature type="transit peptide" description="Chloroplast" evidence="4">
    <location>
        <begin position="1"/>
        <end position="31"/>
    </location>
</feature>
<feature type="chain" id="PRO_0000454961" description="Alpha pinene synthase, chloroplastic">
    <location>
        <begin position="32"/>
        <end position="600"/>
    </location>
</feature>
<feature type="region of interest" description="Disordered" evidence="5">
    <location>
        <begin position="1"/>
        <end position="26"/>
    </location>
</feature>
<feature type="short sequence motif" description="DDXXD motif" evidence="1">
    <location>
        <begin position="354"/>
        <end position="358"/>
    </location>
</feature>
<feature type="binding site" evidence="2">
    <location>
        <position position="354"/>
    </location>
    <ligand>
        <name>Mg(2+)</name>
        <dbReference type="ChEBI" id="CHEBI:18420"/>
        <label>1</label>
    </ligand>
</feature>
<feature type="binding site" evidence="2">
    <location>
        <position position="354"/>
    </location>
    <ligand>
        <name>Mg(2+)</name>
        <dbReference type="ChEBI" id="CHEBI:18420"/>
        <label>2</label>
    </ligand>
</feature>
<feature type="binding site" evidence="2">
    <location>
        <position position="358"/>
    </location>
    <ligand>
        <name>Mg(2+)</name>
        <dbReference type="ChEBI" id="CHEBI:18420"/>
        <label>1</label>
    </ligand>
</feature>
<feature type="binding site" evidence="2">
    <location>
        <position position="358"/>
    </location>
    <ligand>
        <name>Mg(2+)</name>
        <dbReference type="ChEBI" id="CHEBI:18420"/>
        <label>2</label>
    </ligand>
</feature>
<feature type="binding site" evidence="2">
    <location>
        <position position="498"/>
    </location>
    <ligand>
        <name>Mg(2+)</name>
        <dbReference type="ChEBI" id="CHEBI:18420"/>
        <label>3</label>
    </ligand>
</feature>
<feature type="binding site" evidence="2">
    <location>
        <position position="506"/>
    </location>
    <ligand>
        <name>Mg(2+)</name>
        <dbReference type="ChEBI" id="CHEBI:18420"/>
        <label>3</label>
    </ligand>
</feature>
<evidence type="ECO:0000250" key="1">
    <source>
        <dbReference type="UniProtKB" id="A0A1C9J6A7"/>
    </source>
</evidence>
<evidence type="ECO:0000250" key="2">
    <source>
        <dbReference type="UniProtKB" id="Q40577"/>
    </source>
</evidence>
<evidence type="ECO:0000250" key="3">
    <source>
        <dbReference type="UniProtKB" id="T1RRI8"/>
    </source>
</evidence>
<evidence type="ECO:0000255" key="4"/>
<evidence type="ECO:0000256" key="5">
    <source>
        <dbReference type="SAM" id="MobiDB-lite"/>
    </source>
</evidence>
<evidence type="ECO:0000269" key="6">
    <source>
    </source>
</evidence>
<evidence type="ECO:0000303" key="7">
    <source>
    </source>
</evidence>
<evidence type="ECO:0000305" key="8"/>
<protein>
    <recommendedName>
        <fullName evidence="7">Alpha pinene synthase, chloroplastic</fullName>
        <shortName evidence="7">LsPINS</shortName>
        <ecNumber evidence="3">4.2.3.-</ecNumber>
    </recommendedName>
</protein>